<comment type="function">
    <text evidence="1">GTPase that plays an essential role in the late steps of ribosome biogenesis.</text>
</comment>
<comment type="subunit">
    <text evidence="1">Associates with the 50S ribosomal subunit.</text>
</comment>
<comment type="similarity">
    <text evidence="1">Belongs to the TRAFAC class TrmE-Era-EngA-EngB-Septin-like GTPase superfamily. EngA (Der) GTPase family.</text>
</comment>
<evidence type="ECO:0000255" key="1">
    <source>
        <dbReference type="HAMAP-Rule" id="MF_00195"/>
    </source>
</evidence>
<reference key="1">
    <citation type="journal article" date="2006" name="J. Bacteriol.">
        <title>Pathogenomic sequence analysis of Bacillus cereus and Bacillus thuringiensis isolates closely related to Bacillus anthracis.</title>
        <authorList>
            <person name="Han C.S."/>
            <person name="Xie G."/>
            <person name="Challacombe J.F."/>
            <person name="Altherr M.R."/>
            <person name="Bhotika S.S."/>
            <person name="Bruce D."/>
            <person name="Campbell C.S."/>
            <person name="Campbell M.L."/>
            <person name="Chen J."/>
            <person name="Chertkov O."/>
            <person name="Cleland C."/>
            <person name="Dimitrijevic M."/>
            <person name="Doggett N.A."/>
            <person name="Fawcett J.J."/>
            <person name="Glavina T."/>
            <person name="Goodwin L.A."/>
            <person name="Hill K.K."/>
            <person name="Hitchcock P."/>
            <person name="Jackson P.J."/>
            <person name="Keim P."/>
            <person name="Kewalramani A.R."/>
            <person name="Longmire J."/>
            <person name="Lucas S."/>
            <person name="Malfatti S."/>
            <person name="McMurry K."/>
            <person name="Meincke L.J."/>
            <person name="Misra M."/>
            <person name="Moseman B.L."/>
            <person name="Mundt M."/>
            <person name="Munk A.C."/>
            <person name="Okinaka R.T."/>
            <person name="Parson-Quintana B."/>
            <person name="Reilly L.P."/>
            <person name="Richardson P."/>
            <person name="Robinson D.L."/>
            <person name="Rubin E."/>
            <person name="Saunders E."/>
            <person name="Tapia R."/>
            <person name="Tesmer J.G."/>
            <person name="Thayer N."/>
            <person name="Thompson L.S."/>
            <person name="Tice H."/>
            <person name="Ticknor L.O."/>
            <person name="Wills P.L."/>
            <person name="Brettin T.S."/>
            <person name="Gilna P."/>
        </authorList>
    </citation>
    <scope>NUCLEOTIDE SEQUENCE [LARGE SCALE GENOMIC DNA]</scope>
    <source>
        <strain>97-27</strain>
    </source>
</reference>
<proteinExistence type="inferred from homology"/>
<accession>Q6HL51</accession>
<gene>
    <name evidence="1" type="primary">der</name>
    <name type="synonym">engA</name>
    <name type="ordered locus">BT9727_1386</name>
</gene>
<feature type="chain" id="PRO_1000011564" description="GTPase Der">
    <location>
        <begin position="1"/>
        <end position="436"/>
    </location>
</feature>
<feature type="domain" description="EngA-type G 1">
    <location>
        <begin position="4"/>
        <end position="167"/>
    </location>
</feature>
<feature type="domain" description="EngA-type G 2">
    <location>
        <begin position="176"/>
        <end position="351"/>
    </location>
</feature>
<feature type="domain" description="KH-like" evidence="1">
    <location>
        <begin position="352"/>
        <end position="436"/>
    </location>
</feature>
<feature type="binding site" evidence="1">
    <location>
        <begin position="10"/>
        <end position="17"/>
    </location>
    <ligand>
        <name>GTP</name>
        <dbReference type="ChEBI" id="CHEBI:37565"/>
        <label>1</label>
    </ligand>
</feature>
<feature type="binding site" evidence="1">
    <location>
        <begin position="57"/>
        <end position="61"/>
    </location>
    <ligand>
        <name>GTP</name>
        <dbReference type="ChEBI" id="CHEBI:37565"/>
        <label>1</label>
    </ligand>
</feature>
<feature type="binding site" evidence="1">
    <location>
        <begin position="119"/>
        <end position="122"/>
    </location>
    <ligand>
        <name>GTP</name>
        <dbReference type="ChEBI" id="CHEBI:37565"/>
        <label>1</label>
    </ligand>
</feature>
<feature type="binding site" evidence="1">
    <location>
        <begin position="182"/>
        <end position="189"/>
    </location>
    <ligand>
        <name>GTP</name>
        <dbReference type="ChEBI" id="CHEBI:37565"/>
        <label>2</label>
    </ligand>
</feature>
<feature type="binding site" evidence="1">
    <location>
        <begin position="229"/>
        <end position="233"/>
    </location>
    <ligand>
        <name>GTP</name>
        <dbReference type="ChEBI" id="CHEBI:37565"/>
        <label>2</label>
    </ligand>
</feature>
<feature type="binding site" evidence="1">
    <location>
        <begin position="294"/>
        <end position="297"/>
    </location>
    <ligand>
        <name>GTP</name>
        <dbReference type="ChEBI" id="CHEBI:37565"/>
        <label>2</label>
    </ligand>
</feature>
<dbReference type="EMBL" id="AE017355">
    <property type="protein sequence ID" value="AAT59456.1"/>
    <property type="molecule type" value="Genomic_DNA"/>
</dbReference>
<dbReference type="RefSeq" id="WP_001125893.1">
    <property type="nucleotide sequence ID" value="NC_005957.1"/>
</dbReference>
<dbReference type="RefSeq" id="YP_035720.1">
    <property type="nucleotide sequence ID" value="NC_005957.1"/>
</dbReference>
<dbReference type="SMR" id="Q6HL51"/>
<dbReference type="GeneID" id="93009536"/>
<dbReference type="KEGG" id="btk:BT9727_1386"/>
<dbReference type="PATRIC" id="fig|281309.8.peg.1458"/>
<dbReference type="HOGENOM" id="CLU_016077_6_2_9"/>
<dbReference type="Proteomes" id="UP000001301">
    <property type="component" value="Chromosome"/>
</dbReference>
<dbReference type="GO" id="GO:0005525">
    <property type="term" value="F:GTP binding"/>
    <property type="evidence" value="ECO:0007669"/>
    <property type="project" value="UniProtKB-UniRule"/>
</dbReference>
<dbReference type="GO" id="GO:0043022">
    <property type="term" value="F:ribosome binding"/>
    <property type="evidence" value="ECO:0007669"/>
    <property type="project" value="TreeGrafter"/>
</dbReference>
<dbReference type="GO" id="GO:0042254">
    <property type="term" value="P:ribosome biogenesis"/>
    <property type="evidence" value="ECO:0007669"/>
    <property type="project" value="UniProtKB-KW"/>
</dbReference>
<dbReference type="CDD" id="cd01894">
    <property type="entry name" value="EngA1"/>
    <property type="match status" value="1"/>
</dbReference>
<dbReference type="CDD" id="cd01895">
    <property type="entry name" value="EngA2"/>
    <property type="match status" value="1"/>
</dbReference>
<dbReference type="FunFam" id="3.30.300.20:FF:000004">
    <property type="entry name" value="GTPase Der"/>
    <property type="match status" value="1"/>
</dbReference>
<dbReference type="FunFam" id="3.40.50.300:FF:000040">
    <property type="entry name" value="GTPase Der"/>
    <property type="match status" value="1"/>
</dbReference>
<dbReference type="FunFam" id="3.40.50.300:FF:000057">
    <property type="entry name" value="GTPase Der"/>
    <property type="match status" value="1"/>
</dbReference>
<dbReference type="Gene3D" id="3.30.300.20">
    <property type="match status" value="1"/>
</dbReference>
<dbReference type="Gene3D" id="3.40.50.300">
    <property type="entry name" value="P-loop containing nucleotide triphosphate hydrolases"/>
    <property type="match status" value="2"/>
</dbReference>
<dbReference type="HAMAP" id="MF_00195">
    <property type="entry name" value="GTPase_Der"/>
    <property type="match status" value="1"/>
</dbReference>
<dbReference type="InterPro" id="IPR031166">
    <property type="entry name" value="G_ENGA"/>
</dbReference>
<dbReference type="InterPro" id="IPR006073">
    <property type="entry name" value="GTP-bd"/>
</dbReference>
<dbReference type="InterPro" id="IPR016484">
    <property type="entry name" value="GTPase_Der"/>
</dbReference>
<dbReference type="InterPro" id="IPR032859">
    <property type="entry name" value="KH_dom-like"/>
</dbReference>
<dbReference type="InterPro" id="IPR015946">
    <property type="entry name" value="KH_dom-like_a/b"/>
</dbReference>
<dbReference type="InterPro" id="IPR027417">
    <property type="entry name" value="P-loop_NTPase"/>
</dbReference>
<dbReference type="InterPro" id="IPR005225">
    <property type="entry name" value="Small_GTP-bd"/>
</dbReference>
<dbReference type="NCBIfam" id="TIGR03594">
    <property type="entry name" value="GTPase_EngA"/>
    <property type="match status" value="1"/>
</dbReference>
<dbReference type="NCBIfam" id="TIGR00231">
    <property type="entry name" value="small_GTP"/>
    <property type="match status" value="2"/>
</dbReference>
<dbReference type="PANTHER" id="PTHR43834">
    <property type="entry name" value="GTPASE DER"/>
    <property type="match status" value="1"/>
</dbReference>
<dbReference type="PANTHER" id="PTHR43834:SF6">
    <property type="entry name" value="GTPASE DER"/>
    <property type="match status" value="1"/>
</dbReference>
<dbReference type="Pfam" id="PF14714">
    <property type="entry name" value="KH_dom-like"/>
    <property type="match status" value="1"/>
</dbReference>
<dbReference type="Pfam" id="PF01926">
    <property type="entry name" value="MMR_HSR1"/>
    <property type="match status" value="2"/>
</dbReference>
<dbReference type="PIRSF" id="PIRSF006485">
    <property type="entry name" value="GTP-binding_EngA"/>
    <property type="match status" value="1"/>
</dbReference>
<dbReference type="PRINTS" id="PR00326">
    <property type="entry name" value="GTP1OBG"/>
</dbReference>
<dbReference type="SUPFAM" id="SSF52540">
    <property type="entry name" value="P-loop containing nucleoside triphosphate hydrolases"/>
    <property type="match status" value="2"/>
</dbReference>
<dbReference type="PROSITE" id="PS51712">
    <property type="entry name" value="G_ENGA"/>
    <property type="match status" value="2"/>
</dbReference>
<name>DER_BACHK</name>
<keyword id="KW-0342">GTP-binding</keyword>
<keyword id="KW-0547">Nucleotide-binding</keyword>
<keyword id="KW-0677">Repeat</keyword>
<keyword id="KW-0690">Ribosome biogenesis</keyword>
<organism>
    <name type="scientific">Bacillus thuringiensis subsp. konkukian (strain 97-27)</name>
    <dbReference type="NCBI Taxonomy" id="281309"/>
    <lineage>
        <taxon>Bacteria</taxon>
        <taxon>Bacillati</taxon>
        <taxon>Bacillota</taxon>
        <taxon>Bacilli</taxon>
        <taxon>Bacillales</taxon>
        <taxon>Bacillaceae</taxon>
        <taxon>Bacillus</taxon>
        <taxon>Bacillus cereus group</taxon>
    </lineage>
</organism>
<protein>
    <recommendedName>
        <fullName evidence="1">GTPase Der</fullName>
    </recommendedName>
    <alternativeName>
        <fullName evidence="1">GTP-binding protein EngA</fullName>
    </alternativeName>
</protein>
<sequence>MPKPVIAIVGRPNVGKSTIFNRIVGERVSIVEDIPGVTRDRIYSAGEWLNHEFNIIDTGGIDIGDEPFLTQIRQQAEVAIDEADVIIFMTNGRDGVTAADEEVAKILYRSNKPVVLAVNKVDNPEMRSDIYDFYALGFGEPFPISGTHGLGLGDLLDEAAQHFPKIEEDGYDEDTIRFSLIGRPNVGKSSLVNALLGQERVIVSNVAGTTRDAVDTPYSKDGKDYVIIDTAGMRKKGKVYESTEKYSVLRALRAIERSDVVLVVLDGEEGIIEQDKKIAGYAHDSGRAVVIVVNKWDAVKKDEKTMKAFEENIRAHFQFLEYAPIVFLSAKTRKRTQTLIPVIDEVNESHSIRIQTNVLNDVIMDAVAMNPTPTHNGSRLKIFYATQVAVKPPTFVVFVNDPELLHFSYERFLKNRLRESFGFVGTPIHIIARARD</sequence>